<gene>
    <name evidence="1" type="primary">tatA</name>
    <name type="ordered locus">Shewmr7_0402</name>
</gene>
<dbReference type="EMBL" id="CP000444">
    <property type="protein sequence ID" value="ABI41405.1"/>
    <property type="molecule type" value="Genomic_DNA"/>
</dbReference>
<dbReference type="SMR" id="Q0HZQ0"/>
<dbReference type="KEGG" id="shm:Shewmr7_0402"/>
<dbReference type="HOGENOM" id="CLU_086034_5_1_6"/>
<dbReference type="GO" id="GO:0033281">
    <property type="term" value="C:TAT protein transport complex"/>
    <property type="evidence" value="ECO:0007669"/>
    <property type="project" value="UniProtKB-UniRule"/>
</dbReference>
<dbReference type="GO" id="GO:0008320">
    <property type="term" value="F:protein transmembrane transporter activity"/>
    <property type="evidence" value="ECO:0007669"/>
    <property type="project" value="UniProtKB-UniRule"/>
</dbReference>
<dbReference type="GO" id="GO:0043953">
    <property type="term" value="P:protein transport by the Tat complex"/>
    <property type="evidence" value="ECO:0007669"/>
    <property type="project" value="UniProtKB-UniRule"/>
</dbReference>
<dbReference type="Gene3D" id="1.20.5.3310">
    <property type="match status" value="1"/>
</dbReference>
<dbReference type="HAMAP" id="MF_00236">
    <property type="entry name" value="TatA_E"/>
    <property type="match status" value="1"/>
</dbReference>
<dbReference type="InterPro" id="IPR003369">
    <property type="entry name" value="TatA/B/E"/>
</dbReference>
<dbReference type="InterPro" id="IPR006312">
    <property type="entry name" value="TatA/E"/>
</dbReference>
<dbReference type="NCBIfam" id="NF002813">
    <property type="entry name" value="PRK02958.1"/>
    <property type="match status" value="1"/>
</dbReference>
<dbReference type="NCBIfam" id="TIGR01411">
    <property type="entry name" value="tatAE"/>
    <property type="match status" value="1"/>
</dbReference>
<dbReference type="PANTHER" id="PTHR42982">
    <property type="entry name" value="SEC-INDEPENDENT PROTEIN TRANSLOCASE PROTEIN TATA"/>
    <property type="match status" value="1"/>
</dbReference>
<dbReference type="PANTHER" id="PTHR42982:SF1">
    <property type="entry name" value="SEC-INDEPENDENT PROTEIN TRANSLOCASE PROTEIN TATA"/>
    <property type="match status" value="1"/>
</dbReference>
<dbReference type="Pfam" id="PF02416">
    <property type="entry name" value="TatA_B_E"/>
    <property type="match status" value="1"/>
</dbReference>
<feature type="chain" id="PRO_1000044447" description="Sec-independent protein translocase protein TatA">
    <location>
        <begin position="1"/>
        <end position="85"/>
    </location>
</feature>
<feature type="transmembrane region" description="Helical" evidence="1">
    <location>
        <begin position="1"/>
        <end position="21"/>
    </location>
</feature>
<feature type="region of interest" description="Disordered" evidence="2">
    <location>
        <begin position="43"/>
        <end position="85"/>
    </location>
</feature>
<feature type="compositionally biased region" description="Basic and acidic residues" evidence="2">
    <location>
        <begin position="46"/>
        <end position="57"/>
    </location>
</feature>
<feature type="compositionally biased region" description="Low complexity" evidence="2">
    <location>
        <begin position="58"/>
        <end position="73"/>
    </location>
</feature>
<feature type="compositionally biased region" description="Basic and acidic residues" evidence="2">
    <location>
        <begin position="74"/>
        <end position="85"/>
    </location>
</feature>
<sequence>MGGISIWQLLIIALIVVLLFGTKKLRSLGGDLGGAVKGFKNAMSSEEDKKALEDAEAAKPVQTAQTAQPTQQATEKKPESNKEQA</sequence>
<keyword id="KW-0997">Cell inner membrane</keyword>
<keyword id="KW-1003">Cell membrane</keyword>
<keyword id="KW-0472">Membrane</keyword>
<keyword id="KW-0653">Protein transport</keyword>
<keyword id="KW-0811">Translocation</keyword>
<keyword id="KW-0812">Transmembrane</keyword>
<keyword id="KW-1133">Transmembrane helix</keyword>
<keyword id="KW-0813">Transport</keyword>
<reference key="1">
    <citation type="submission" date="2006-08" db="EMBL/GenBank/DDBJ databases">
        <title>Complete sequence of chromosome 1 of Shewanella sp. MR-7.</title>
        <authorList>
            <person name="Copeland A."/>
            <person name="Lucas S."/>
            <person name="Lapidus A."/>
            <person name="Barry K."/>
            <person name="Detter J.C."/>
            <person name="Glavina del Rio T."/>
            <person name="Hammon N."/>
            <person name="Israni S."/>
            <person name="Dalin E."/>
            <person name="Tice H."/>
            <person name="Pitluck S."/>
            <person name="Kiss H."/>
            <person name="Brettin T."/>
            <person name="Bruce D."/>
            <person name="Han C."/>
            <person name="Tapia R."/>
            <person name="Gilna P."/>
            <person name="Schmutz J."/>
            <person name="Larimer F."/>
            <person name="Land M."/>
            <person name="Hauser L."/>
            <person name="Kyrpides N."/>
            <person name="Mikhailova N."/>
            <person name="Nealson K."/>
            <person name="Konstantinidis K."/>
            <person name="Klappenbach J."/>
            <person name="Tiedje J."/>
            <person name="Richardson P."/>
        </authorList>
    </citation>
    <scope>NUCLEOTIDE SEQUENCE [LARGE SCALE GENOMIC DNA]</scope>
    <source>
        <strain>MR-7</strain>
    </source>
</reference>
<protein>
    <recommendedName>
        <fullName evidence="1">Sec-independent protein translocase protein TatA</fullName>
    </recommendedName>
</protein>
<organism>
    <name type="scientific">Shewanella sp. (strain MR-7)</name>
    <dbReference type="NCBI Taxonomy" id="60481"/>
    <lineage>
        <taxon>Bacteria</taxon>
        <taxon>Pseudomonadati</taxon>
        <taxon>Pseudomonadota</taxon>
        <taxon>Gammaproteobacteria</taxon>
        <taxon>Alteromonadales</taxon>
        <taxon>Shewanellaceae</taxon>
        <taxon>Shewanella</taxon>
    </lineage>
</organism>
<accession>Q0HZQ0</accession>
<name>TATA_SHESR</name>
<comment type="function">
    <text evidence="1">Part of the twin-arginine translocation (Tat) system that transports large folded proteins containing a characteristic twin-arginine motif in their signal peptide across membranes. TatA could form the protein-conducting channel of the Tat system.</text>
</comment>
<comment type="subunit">
    <text evidence="1">The Tat system comprises two distinct complexes: a TatABC complex, containing multiple copies of TatA, TatB and TatC subunits, and a separate TatA complex, containing only TatA subunits. Substrates initially bind to the TatABC complex, which probably triggers association of the separate TatA complex to form the active translocon.</text>
</comment>
<comment type="subcellular location">
    <subcellularLocation>
        <location evidence="1">Cell inner membrane</location>
        <topology evidence="1">Single-pass membrane protein</topology>
    </subcellularLocation>
</comment>
<comment type="similarity">
    <text evidence="1">Belongs to the TatA/E family.</text>
</comment>
<proteinExistence type="inferred from homology"/>
<evidence type="ECO:0000255" key="1">
    <source>
        <dbReference type="HAMAP-Rule" id="MF_00236"/>
    </source>
</evidence>
<evidence type="ECO:0000256" key="2">
    <source>
        <dbReference type="SAM" id="MobiDB-lite"/>
    </source>
</evidence>